<sequence length="274" mass="30196">MNKTAIALLALLASSASLAATPWQKITQPVPGSAQSIGSFSNGCIVGADTLPIQSEHYQVMRTDQRRYFGHPDLVMFIQRLSRQVSNLGMGTVLIGDMGMPAGGRFNGGHASHQTGLDVDIFLQLPKTRWTSAQLLRPQALDLVSRDGKHVVPALWKPEIFSLIKLAAQDKDVTRIFVNPAIKQQLCLDAGTDRDWLRKVRPWFQHRAHMHVRLRCPADSLECEDQPLPPPGDGCGAELQSWFEPPKPGTTKPEKKTPPPLPPSCQALLDEHVI</sequence>
<keyword id="KW-1015">Disulfide bond</keyword>
<keyword id="KW-0378">Hydrolase</keyword>
<keyword id="KW-0479">Metal-binding</keyword>
<keyword id="KW-0482">Metalloprotease</keyword>
<keyword id="KW-0574">Periplasm</keyword>
<keyword id="KW-0645">Protease</keyword>
<keyword id="KW-0732">Signal</keyword>
<keyword id="KW-0862">Zinc</keyword>
<feature type="signal peptide" evidence="1">
    <location>
        <begin position="1"/>
        <end position="19"/>
    </location>
</feature>
<feature type="chain" id="PRO_1000186097" description="Penicillin-insensitive murein endopeptidase">
    <location>
        <begin position="20"/>
        <end position="274"/>
    </location>
</feature>
<feature type="region of interest" description="Disordered" evidence="2">
    <location>
        <begin position="227"/>
        <end position="274"/>
    </location>
</feature>
<feature type="binding site" evidence="1">
    <location>
        <position position="110"/>
    </location>
    <ligand>
        <name>Zn(2+)</name>
        <dbReference type="ChEBI" id="CHEBI:29105"/>
        <label>1</label>
    </ligand>
</feature>
<feature type="binding site" evidence="1">
    <location>
        <position position="113"/>
    </location>
    <ligand>
        <name>Zn(2+)</name>
        <dbReference type="ChEBI" id="CHEBI:29105"/>
        <label>1</label>
    </ligand>
</feature>
<feature type="binding site" evidence="1">
    <location>
        <position position="120"/>
    </location>
    <ligand>
        <name>Zn(2+)</name>
        <dbReference type="ChEBI" id="CHEBI:29105"/>
        <label>1</label>
    </ligand>
</feature>
<feature type="binding site" evidence="1">
    <location>
        <position position="147"/>
    </location>
    <ligand>
        <name>Zn(2+)</name>
        <dbReference type="ChEBI" id="CHEBI:29105"/>
        <label>2</label>
    </ligand>
</feature>
<feature type="binding site" evidence="1">
    <location>
        <position position="150"/>
    </location>
    <ligand>
        <name>Zn(2+)</name>
        <dbReference type="ChEBI" id="CHEBI:29105"/>
        <label>2</label>
    </ligand>
</feature>
<feature type="binding site" evidence="1">
    <location>
        <position position="211"/>
    </location>
    <ligand>
        <name>Zn(2+)</name>
        <dbReference type="ChEBI" id="CHEBI:29105"/>
        <label>1</label>
    </ligand>
</feature>
<feature type="disulfide bond" evidence="1">
    <location>
        <begin position="44"/>
        <end position="265"/>
    </location>
</feature>
<feature type="disulfide bond" evidence="1">
    <location>
        <begin position="187"/>
        <end position="235"/>
    </location>
</feature>
<feature type="disulfide bond" evidence="1">
    <location>
        <begin position="216"/>
        <end position="223"/>
    </location>
</feature>
<proteinExistence type="inferred from homology"/>
<reference key="1">
    <citation type="journal article" date="2009" name="PLoS Genet.">
        <title>Organised genome dynamics in the Escherichia coli species results in highly diverse adaptive paths.</title>
        <authorList>
            <person name="Touchon M."/>
            <person name="Hoede C."/>
            <person name="Tenaillon O."/>
            <person name="Barbe V."/>
            <person name="Baeriswyl S."/>
            <person name="Bidet P."/>
            <person name="Bingen E."/>
            <person name="Bonacorsi S."/>
            <person name="Bouchier C."/>
            <person name="Bouvet O."/>
            <person name="Calteau A."/>
            <person name="Chiapello H."/>
            <person name="Clermont O."/>
            <person name="Cruveiller S."/>
            <person name="Danchin A."/>
            <person name="Diard M."/>
            <person name="Dossat C."/>
            <person name="Karoui M.E."/>
            <person name="Frapy E."/>
            <person name="Garry L."/>
            <person name="Ghigo J.M."/>
            <person name="Gilles A.M."/>
            <person name="Johnson J."/>
            <person name="Le Bouguenec C."/>
            <person name="Lescat M."/>
            <person name="Mangenot S."/>
            <person name="Martinez-Jehanne V."/>
            <person name="Matic I."/>
            <person name="Nassif X."/>
            <person name="Oztas S."/>
            <person name="Petit M.A."/>
            <person name="Pichon C."/>
            <person name="Rouy Z."/>
            <person name="Ruf C.S."/>
            <person name="Schneider D."/>
            <person name="Tourret J."/>
            <person name="Vacherie B."/>
            <person name="Vallenet D."/>
            <person name="Medigue C."/>
            <person name="Rocha E.P.C."/>
            <person name="Denamur E."/>
        </authorList>
    </citation>
    <scope>NUCLEOTIDE SEQUENCE [LARGE SCALE GENOMIC DNA]</scope>
    <source>
        <strain>ED1a</strain>
    </source>
</reference>
<protein>
    <recommendedName>
        <fullName evidence="1">Penicillin-insensitive murein endopeptidase</fullName>
        <ecNumber evidence="1">3.4.24.-</ecNumber>
    </recommendedName>
    <alternativeName>
        <fullName evidence="1">D-alanyl-D-alanine-endopeptidase</fullName>
        <shortName evidence="1">DD-endopeptidase</shortName>
    </alternativeName>
</protein>
<gene>
    <name evidence="1" type="primary">mepA</name>
    <name type="ordered locus">ECED1_2792</name>
</gene>
<dbReference type="EC" id="3.4.24.-" evidence="1"/>
<dbReference type="EMBL" id="CU928162">
    <property type="protein sequence ID" value="CAR08971.2"/>
    <property type="molecule type" value="Genomic_DNA"/>
</dbReference>
<dbReference type="RefSeq" id="WP_001043802.1">
    <property type="nucleotide sequence ID" value="NC_011745.1"/>
</dbReference>
<dbReference type="SMR" id="B7MY05"/>
<dbReference type="MEROPS" id="M74.001"/>
<dbReference type="KEGG" id="ecq:ECED1_2792"/>
<dbReference type="HOGENOM" id="CLU_052496_0_0_6"/>
<dbReference type="Proteomes" id="UP000000748">
    <property type="component" value="Chromosome"/>
</dbReference>
<dbReference type="GO" id="GO:0030288">
    <property type="term" value="C:outer membrane-bounded periplasmic space"/>
    <property type="evidence" value="ECO:0007669"/>
    <property type="project" value="InterPro"/>
</dbReference>
<dbReference type="GO" id="GO:0046872">
    <property type="term" value="F:metal ion binding"/>
    <property type="evidence" value="ECO:0007669"/>
    <property type="project" value="UniProtKB-KW"/>
</dbReference>
<dbReference type="GO" id="GO:0004222">
    <property type="term" value="F:metalloendopeptidase activity"/>
    <property type="evidence" value="ECO:0007669"/>
    <property type="project" value="UniProtKB-UniRule"/>
</dbReference>
<dbReference type="GO" id="GO:0004252">
    <property type="term" value="F:serine-type endopeptidase activity"/>
    <property type="evidence" value="ECO:0007669"/>
    <property type="project" value="InterPro"/>
</dbReference>
<dbReference type="GO" id="GO:0000270">
    <property type="term" value="P:peptidoglycan metabolic process"/>
    <property type="evidence" value="ECO:0007669"/>
    <property type="project" value="UniProtKB-UniRule"/>
</dbReference>
<dbReference type="GO" id="GO:0006508">
    <property type="term" value="P:proteolysis"/>
    <property type="evidence" value="ECO:0007669"/>
    <property type="project" value="UniProtKB-KW"/>
</dbReference>
<dbReference type="FunFam" id="3.30.1380.10:FF:000002">
    <property type="entry name" value="Penicillin-insensitive murein endopeptidase"/>
    <property type="match status" value="1"/>
</dbReference>
<dbReference type="Gene3D" id="3.30.1380.10">
    <property type="match status" value="1"/>
</dbReference>
<dbReference type="HAMAP" id="MF_01623">
    <property type="entry name" value="MepA"/>
    <property type="match status" value="1"/>
</dbReference>
<dbReference type="InterPro" id="IPR009045">
    <property type="entry name" value="Hedgehog_sig/DD-Pept_Zn-bd_sf"/>
</dbReference>
<dbReference type="InterPro" id="IPR005073">
    <property type="entry name" value="Peptidase_M74"/>
</dbReference>
<dbReference type="NCBIfam" id="NF006947">
    <property type="entry name" value="PRK09429.1"/>
    <property type="match status" value="1"/>
</dbReference>
<dbReference type="Pfam" id="PF03411">
    <property type="entry name" value="Peptidase_M74"/>
    <property type="match status" value="1"/>
</dbReference>
<dbReference type="PIRSF" id="PIRSF018455">
    <property type="entry name" value="MepA"/>
    <property type="match status" value="1"/>
</dbReference>
<dbReference type="SUPFAM" id="SSF55166">
    <property type="entry name" value="Hedgehog/DD-peptidase"/>
    <property type="match status" value="1"/>
</dbReference>
<accession>B7MY05</accession>
<organism>
    <name type="scientific">Escherichia coli O81 (strain ED1a)</name>
    <dbReference type="NCBI Taxonomy" id="585397"/>
    <lineage>
        <taxon>Bacteria</taxon>
        <taxon>Pseudomonadati</taxon>
        <taxon>Pseudomonadota</taxon>
        <taxon>Gammaproteobacteria</taxon>
        <taxon>Enterobacterales</taxon>
        <taxon>Enterobacteriaceae</taxon>
        <taxon>Escherichia</taxon>
    </lineage>
</organism>
<name>MEPA_ECO81</name>
<evidence type="ECO:0000255" key="1">
    <source>
        <dbReference type="HAMAP-Rule" id="MF_01623"/>
    </source>
</evidence>
<evidence type="ECO:0000256" key="2">
    <source>
        <dbReference type="SAM" id="MobiDB-lite"/>
    </source>
</evidence>
<comment type="function">
    <text evidence="1">Murein endopeptidase that cleaves the D-alanyl-meso-2,6-diamino-pimelyl amide bond that connects peptidoglycan strands. Likely plays a role in the removal of murein from the sacculus.</text>
</comment>
<comment type="cofactor">
    <cofactor evidence="1">
        <name>Zn(2+)</name>
        <dbReference type="ChEBI" id="CHEBI:29105"/>
    </cofactor>
    <text evidence="1">Binds 2 Zn(2+) ions per subunit. Zn(2+) ion 1 is bound in the active site. Zn(2+) ion 2 is bound at the dimer interface by residues from both subunits.</text>
</comment>
<comment type="subunit">
    <text evidence="1">Dimer.</text>
</comment>
<comment type="subcellular location">
    <subcellularLocation>
        <location evidence="1">Periplasm</location>
    </subcellularLocation>
</comment>
<comment type="similarity">
    <text evidence="1">Belongs to the peptidase M74 family.</text>
</comment>